<comment type="function">
    <text evidence="1">Required for maturation of 30S ribosomal subunits.</text>
</comment>
<comment type="subcellular location">
    <subcellularLocation>
        <location evidence="1">Cytoplasm</location>
    </subcellularLocation>
</comment>
<comment type="similarity">
    <text evidence="1">Belongs to the RimP family.</text>
</comment>
<comment type="sequence caution" evidence="2">
    <conflict type="erroneous initiation">
        <sequence resource="EMBL-CDS" id="AAL22160"/>
    </conflict>
</comment>
<accession>P67218</accession>
<accession>Q8XFC7</accession>
<name>RIMP_SALTY</name>
<reference key="1">
    <citation type="journal article" date="2001" name="Nature">
        <title>Complete genome sequence of Salmonella enterica serovar Typhimurium LT2.</title>
        <authorList>
            <person name="McClelland M."/>
            <person name="Sanderson K.E."/>
            <person name="Spieth J."/>
            <person name="Clifton S.W."/>
            <person name="Latreille P."/>
            <person name="Courtney L."/>
            <person name="Porwollik S."/>
            <person name="Ali J."/>
            <person name="Dante M."/>
            <person name="Du F."/>
            <person name="Hou S."/>
            <person name="Layman D."/>
            <person name="Leonard S."/>
            <person name="Nguyen C."/>
            <person name="Scott K."/>
            <person name="Holmes A."/>
            <person name="Grewal N."/>
            <person name="Mulvaney E."/>
            <person name="Ryan E."/>
            <person name="Sun H."/>
            <person name="Florea L."/>
            <person name="Miller W."/>
            <person name="Stoneking T."/>
            <person name="Nhan M."/>
            <person name="Waterston R."/>
            <person name="Wilson R.K."/>
        </authorList>
    </citation>
    <scope>NUCLEOTIDE SEQUENCE [LARGE SCALE GENOMIC DNA]</scope>
    <source>
        <strain>LT2 / SGSC1412 / ATCC 700720</strain>
    </source>
</reference>
<protein>
    <recommendedName>
        <fullName evidence="1">Ribosome maturation factor RimP</fullName>
    </recommendedName>
</protein>
<sequence>MGLSTLEQKLTEMITAPVEALGYELVGIEFIRGRTSTLRIYIDSEDGINVDDCADVSHQVSAVLDVEDPISVAYNLEVSSPGLDRPMFTADHYARFQGEEVALVLRMAVQNRRKWQGIIKAVDGEMITVTVEGKDEVFALSNIQKANLVPHF</sequence>
<feature type="chain" id="PRO_0000181915" description="Ribosome maturation factor RimP">
    <location>
        <begin position="1"/>
        <end position="152"/>
    </location>
</feature>
<keyword id="KW-0963">Cytoplasm</keyword>
<keyword id="KW-1185">Reference proteome</keyword>
<keyword id="KW-0690">Ribosome biogenesis</keyword>
<dbReference type="EMBL" id="AE006468">
    <property type="protein sequence ID" value="AAL22160.1"/>
    <property type="status" value="ALT_INIT"/>
    <property type="molecule type" value="Genomic_DNA"/>
</dbReference>
<dbReference type="RefSeq" id="WP_000626993.1">
    <property type="nucleotide sequence ID" value="NC_003197.2"/>
</dbReference>
<dbReference type="SMR" id="P67218"/>
<dbReference type="STRING" id="99287.STM3288"/>
<dbReference type="PaxDb" id="99287-STM3288"/>
<dbReference type="KEGG" id="stm:STM3288"/>
<dbReference type="HOGENOM" id="CLU_070525_1_1_6"/>
<dbReference type="PhylomeDB" id="P67218"/>
<dbReference type="Proteomes" id="UP000001014">
    <property type="component" value="Chromosome"/>
</dbReference>
<dbReference type="GO" id="GO:0005829">
    <property type="term" value="C:cytosol"/>
    <property type="evidence" value="ECO:0000318"/>
    <property type="project" value="GO_Central"/>
</dbReference>
<dbReference type="GO" id="GO:0000028">
    <property type="term" value="P:ribosomal small subunit assembly"/>
    <property type="evidence" value="ECO:0000318"/>
    <property type="project" value="GO_Central"/>
</dbReference>
<dbReference type="GO" id="GO:0006412">
    <property type="term" value="P:translation"/>
    <property type="evidence" value="ECO:0000318"/>
    <property type="project" value="GO_Central"/>
</dbReference>
<dbReference type="CDD" id="cd01734">
    <property type="entry name" value="YlxS_C"/>
    <property type="match status" value="1"/>
</dbReference>
<dbReference type="FunFam" id="2.30.30.180:FF:000001">
    <property type="entry name" value="Ribosome maturation factor RimP"/>
    <property type="match status" value="1"/>
</dbReference>
<dbReference type="FunFam" id="3.30.300.70:FF:000001">
    <property type="entry name" value="Ribosome maturation factor RimP"/>
    <property type="match status" value="1"/>
</dbReference>
<dbReference type="Gene3D" id="2.30.30.180">
    <property type="entry name" value="Ribosome maturation factor RimP, C-terminal domain"/>
    <property type="match status" value="1"/>
</dbReference>
<dbReference type="Gene3D" id="3.30.300.70">
    <property type="entry name" value="RimP-like superfamily, N-terminal"/>
    <property type="match status" value="1"/>
</dbReference>
<dbReference type="HAMAP" id="MF_01077">
    <property type="entry name" value="RimP"/>
    <property type="match status" value="1"/>
</dbReference>
<dbReference type="InterPro" id="IPR003728">
    <property type="entry name" value="Ribosome_maturation_RimP"/>
</dbReference>
<dbReference type="InterPro" id="IPR028998">
    <property type="entry name" value="RimP_C"/>
</dbReference>
<dbReference type="InterPro" id="IPR036847">
    <property type="entry name" value="RimP_C_sf"/>
</dbReference>
<dbReference type="InterPro" id="IPR028989">
    <property type="entry name" value="RimP_N"/>
</dbReference>
<dbReference type="InterPro" id="IPR035956">
    <property type="entry name" value="RimP_N_sf"/>
</dbReference>
<dbReference type="NCBIfam" id="NF000927">
    <property type="entry name" value="PRK00092.1-1"/>
    <property type="match status" value="1"/>
</dbReference>
<dbReference type="PANTHER" id="PTHR33867">
    <property type="entry name" value="RIBOSOME MATURATION FACTOR RIMP"/>
    <property type="match status" value="1"/>
</dbReference>
<dbReference type="PANTHER" id="PTHR33867:SF1">
    <property type="entry name" value="RIBOSOME MATURATION FACTOR RIMP"/>
    <property type="match status" value="1"/>
</dbReference>
<dbReference type="Pfam" id="PF17384">
    <property type="entry name" value="DUF150_C"/>
    <property type="match status" value="1"/>
</dbReference>
<dbReference type="Pfam" id="PF02576">
    <property type="entry name" value="RimP_N"/>
    <property type="match status" value="1"/>
</dbReference>
<dbReference type="SUPFAM" id="SSF74942">
    <property type="entry name" value="YhbC-like, C-terminal domain"/>
    <property type="match status" value="1"/>
</dbReference>
<dbReference type="SUPFAM" id="SSF75420">
    <property type="entry name" value="YhbC-like, N-terminal domain"/>
    <property type="match status" value="1"/>
</dbReference>
<organism>
    <name type="scientific">Salmonella typhimurium (strain LT2 / SGSC1412 / ATCC 700720)</name>
    <dbReference type="NCBI Taxonomy" id="99287"/>
    <lineage>
        <taxon>Bacteria</taxon>
        <taxon>Pseudomonadati</taxon>
        <taxon>Pseudomonadota</taxon>
        <taxon>Gammaproteobacteria</taxon>
        <taxon>Enterobacterales</taxon>
        <taxon>Enterobacteriaceae</taxon>
        <taxon>Salmonella</taxon>
    </lineage>
</organism>
<proteinExistence type="inferred from homology"/>
<evidence type="ECO:0000255" key="1">
    <source>
        <dbReference type="HAMAP-Rule" id="MF_01077"/>
    </source>
</evidence>
<evidence type="ECO:0000305" key="2"/>
<gene>
    <name evidence="1" type="primary">rimP</name>
    <name type="ordered locus">STM3288</name>
</gene>